<name>DCTA_RHIEC</name>
<keyword id="KW-0997">Cell inner membrane</keyword>
<keyword id="KW-1003">Cell membrane</keyword>
<keyword id="KW-0472">Membrane</keyword>
<keyword id="KW-1185">Reference proteome</keyword>
<keyword id="KW-0769">Symport</keyword>
<keyword id="KW-0812">Transmembrane</keyword>
<keyword id="KW-1133">Transmembrane helix</keyword>
<keyword id="KW-0813">Transport</keyword>
<protein>
    <recommendedName>
        <fullName evidence="1">C4-dicarboxylate transport protein</fullName>
    </recommendedName>
</protein>
<sequence>MIAAPLDAVADSKGKKPFYSHLYVQVLAAIAAGILLGHFYPELGTQLKPLGDAFIKLVKMVIAPVIFLTVATGIAGMSDLKKVGRVAGKAMLYFLTFSTLALVIGMIVANVVQPGAGMNIDPASLDPKAVATFADKAHEQSIVGFLTNIIPTTIVGAFADGDILQVLFFSVLFGIALAMVGEKGEQVVTFLNALTAPIFKLVGILMKAAPIGAFGAMAFTIGKYGIGSIANLAMLIGTFYITSLLFVLVVLGAVARYNGFSILALLRYIKEELLLVLGTSSSEAALPGLMNKMEKAGCKRSVVGLVIPTGYSFNLDGTNIYMTLAALFIAQATGIQLSWGDQILLLLVAMLSSKGAAGITGAGFITLAATLSVVPSVPVAGMALILGIDRFMSECRALTNLVGNAVATIVVARWENELDTGQLARALGGESEDTSTAGLQPAE</sequence>
<organism>
    <name type="scientific">Rhizobium etli (strain ATCC 51251 / DSM 11541 / JCM 21823 / NBRC 15573 / CFN 42)</name>
    <dbReference type="NCBI Taxonomy" id="347834"/>
    <lineage>
        <taxon>Bacteria</taxon>
        <taxon>Pseudomonadati</taxon>
        <taxon>Pseudomonadota</taxon>
        <taxon>Alphaproteobacteria</taxon>
        <taxon>Hyphomicrobiales</taxon>
        <taxon>Rhizobiaceae</taxon>
        <taxon>Rhizobium/Agrobacterium group</taxon>
        <taxon>Rhizobium</taxon>
    </lineage>
</organism>
<reference key="1">
    <citation type="journal article" date="2006" name="Proc. Natl. Acad. Sci. U.S.A.">
        <title>The partitioned Rhizobium etli genome: genetic and metabolic redundancy in seven interacting replicons.</title>
        <authorList>
            <person name="Gonzalez V."/>
            <person name="Santamaria R.I."/>
            <person name="Bustos P."/>
            <person name="Hernandez-Gonzalez I."/>
            <person name="Medrano-Soto A."/>
            <person name="Moreno-Hagelsieb G."/>
            <person name="Janga S.C."/>
            <person name="Ramirez M.A."/>
            <person name="Jimenez-Jacinto V."/>
            <person name="Collado-Vides J."/>
            <person name="Davila G."/>
        </authorList>
    </citation>
    <scope>NUCLEOTIDE SEQUENCE [LARGE SCALE GENOMIC DNA]</scope>
    <source>
        <strain>ATCC 51251 / DSM 11541 / JCM 21823 / NBRC 15573 / CFN 42</strain>
    </source>
</reference>
<gene>
    <name evidence="1" type="primary">dctA</name>
    <name type="ordered locus">RHE_CH02971</name>
</gene>
<dbReference type="EMBL" id="CP000133">
    <property type="protein sequence ID" value="ABC91738.1"/>
    <property type="molecule type" value="Genomic_DNA"/>
</dbReference>
<dbReference type="RefSeq" id="WP_011426214.1">
    <property type="nucleotide sequence ID" value="NC_007761.1"/>
</dbReference>
<dbReference type="SMR" id="Q2K5Z8"/>
<dbReference type="KEGG" id="ret:RHE_CH02971"/>
<dbReference type="eggNOG" id="COG1301">
    <property type="taxonomic scope" value="Bacteria"/>
</dbReference>
<dbReference type="HOGENOM" id="CLU_019375_7_0_5"/>
<dbReference type="OrthoDB" id="9766690at2"/>
<dbReference type="Proteomes" id="UP000001936">
    <property type="component" value="Chromosome"/>
</dbReference>
<dbReference type="GO" id="GO:0005886">
    <property type="term" value="C:plasma membrane"/>
    <property type="evidence" value="ECO:0007669"/>
    <property type="project" value="UniProtKB-SubCell"/>
</dbReference>
<dbReference type="GO" id="GO:0015138">
    <property type="term" value="F:fumarate transmembrane transporter activity"/>
    <property type="evidence" value="ECO:0007669"/>
    <property type="project" value="TreeGrafter"/>
</dbReference>
<dbReference type="GO" id="GO:0015366">
    <property type="term" value="F:malate:proton symporter activity"/>
    <property type="evidence" value="ECO:0007669"/>
    <property type="project" value="TreeGrafter"/>
</dbReference>
<dbReference type="GO" id="GO:0015141">
    <property type="term" value="F:succinate transmembrane transporter activity"/>
    <property type="evidence" value="ECO:0007669"/>
    <property type="project" value="TreeGrafter"/>
</dbReference>
<dbReference type="GO" id="GO:0070778">
    <property type="term" value="P:L-aspartate transmembrane transport"/>
    <property type="evidence" value="ECO:0007669"/>
    <property type="project" value="TreeGrafter"/>
</dbReference>
<dbReference type="FunFam" id="1.10.3860.10:FF:000001">
    <property type="entry name" value="C4-dicarboxylate transport protein"/>
    <property type="match status" value="1"/>
</dbReference>
<dbReference type="Gene3D" id="1.10.3860.10">
    <property type="entry name" value="Sodium:dicarboxylate symporter"/>
    <property type="match status" value="1"/>
</dbReference>
<dbReference type="HAMAP" id="MF_01300">
    <property type="entry name" value="C4_dicarb_transport"/>
    <property type="match status" value="1"/>
</dbReference>
<dbReference type="InterPro" id="IPR023954">
    <property type="entry name" value="C4_dicarb_transport"/>
</dbReference>
<dbReference type="InterPro" id="IPR001991">
    <property type="entry name" value="Na-dicarboxylate_symporter"/>
</dbReference>
<dbReference type="InterPro" id="IPR018107">
    <property type="entry name" value="Na-dicarboxylate_symporter_CS"/>
</dbReference>
<dbReference type="InterPro" id="IPR036458">
    <property type="entry name" value="Na:dicarbo_symporter_sf"/>
</dbReference>
<dbReference type="NCBIfam" id="NF002461">
    <property type="entry name" value="PRK01663.1"/>
    <property type="match status" value="1"/>
</dbReference>
<dbReference type="NCBIfam" id="NF009587">
    <property type="entry name" value="PRK13027.1"/>
    <property type="match status" value="1"/>
</dbReference>
<dbReference type="PANTHER" id="PTHR42865:SF1">
    <property type="entry name" value="AEROBIC C4-DICARBOXYLATE TRANSPORT PROTEIN"/>
    <property type="match status" value="1"/>
</dbReference>
<dbReference type="PANTHER" id="PTHR42865">
    <property type="entry name" value="PROTON/GLUTAMATE-ASPARTATE SYMPORTER"/>
    <property type="match status" value="1"/>
</dbReference>
<dbReference type="Pfam" id="PF00375">
    <property type="entry name" value="SDF"/>
    <property type="match status" value="1"/>
</dbReference>
<dbReference type="PRINTS" id="PR00173">
    <property type="entry name" value="EDTRNSPORT"/>
</dbReference>
<dbReference type="SUPFAM" id="SSF118215">
    <property type="entry name" value="Proton glutamate symport protein"/>
    <property type="match status" value="1"/>
</dbReference>
<dbReference type="PROSITE" id="PS00713">
    <property type="entry name" value="NA_DICARBOXYL_SYMP_1"/>
    <property type="match status" value="1"/>
</dbReference>
<dbReference type="PROSITE" id="PS00714">
    <property type="entry name" value="NA_DICARBOXYL_SYMP_2"/>
    <property type="match status" value="1"/>
</dbReference>
<evidence type="ECO:0000255" key="1">
    <source>
        <dbReference type="HAMAP-Rule" id="MF_01300"/>
    </source>
</evidence>
<comment type="function">
    <text evidence="1">Responsible for the transport of dicarboxylates such as succinate, fumarate, and malate from the periplasm across the membrane.</text>
</comment>
<comment type="subcellular location">
    <subcellularLocation>
        <location evidence="1">Cell inner membrane</location>
        <topology evidence="1">Multi-pass membrane protein</topology>
    </subcellularLocation>
</comment>
<comment type="similarity">
    <text evidence="1">Belongs to the dicarboxylate/amino acid:cation symporter (DAACS) (TC 2.A.23) family.</text>
</comment>
<feature type="chain" id="PRO_1000067460" description="C4-dicarboxylate transport protein">
    <location>
        <begin position="1"/>
        <end position="443"/>
    </location>
</feature>
<feature type="transmembrane region" description="Helical" evidence="1">
    <location>
        <begin position="17"/>
        <end position="37"/>
    </location>
</feature>
<feature type="transmembrane region" description="Helical" evidence="1">
    <location>
        <begin position="57"/>
        <end position="77"/>
    </location>
</feature>
<feature type="transmembrane region" description="Helical" evidence="1">
    <location>
        <begin position="92"/>
        <end position="112"/>
    </location>
</feature>
<feature type="transmembrane region" description="Helical" evidence="1">
    <location>
        <begin position="139"/>
        <end position="159"/>
    </location>
</feature>
<feature type="transmembrane region" description="Helical" evidence="1">
    <location>
        <begin position="161"/>
        <end position="181"/>
    </location>
</feature>
<feature type="transmembrane region" description="Helical" evidence="1">
    <location>
        <begin position="201"/>
        <end position="221"/>
    </location>
</feature>
<feature type="transmembrane region" description="Helical" evidence="1">
    <location>
        <begin position="234"/>
        <end position="254"/>
    </location>
</feature>
<feature type="transmembrane region" description="Helical" evidence="1">
    <location>
        <begin position="320"/>
        <end position="340"/>
    </location>
</feature>
<feature type="transmembrane region" description="Helical" evidence="1">
    <location>
        <begin position="368"/>
        <end position="388"/>
    </location>
</feature>
<accession>Q2K5Z8</accession>
<proteinExistence type="inferred from homology"/>